<evidence type="ECO:0000250" key="1"/>
<evidence type="ECO:0000255" key="2"/>
<evidence type="ECO:0000255" key="3">
    <source>
        <dbReference type="PROSITE-ProRule" id="PRU00972"/>
    </source>
</evidence>
<evidence type="ECO:0000256" key="4">
    <source>
        <dbReference type="SAM" id="MobiDB-lite"/>
    </source>
</evidence>
<evidence type="ECO:0000305" key="5"/>
<reference key="1">
    <citation type="journal article" date="2004" name="Nature">
        <title>Genome evolution in yeasts.</title>
        <authorList>
            <person name="Dujon B."/>
            <person name="Sherman D."/>
            <person name="Fischer G."/>
            <person name="Durrens P."/>
            <person name="Casaregola S."/>
            <person name="Lafontaine I."/>
            <person name="de Montigny J."/>
            <person name="Marck C."/>
            <person name="Neuveglise C."/>
            <person name="Talla E."/>
            <person name="Goffard N."/>
            <person name="Frangeul L."/>
            <person name="Aigle M."/>
            <person name="Anthouard V."/>
            <person name="Babour A."/>
            <person name="Barbe V."/>
            <person name="Barnay S."/>
            <person name="Blanchin S."/>
            <person name="Beckerich J.-M."/>
            <person name="Beyne E."/>
            <person name="Bleykasten C."/>
            <person name="Boisrame A."/>
            <person name="Boyer J."/>
            <person name="Cattolico L."/>
            <person name="Confanioleri F."/>
            <person name="de Daruvar A."/>
            <person name="Despons L."/>
            <person name="Fabre E."/>
            <person name="Fairhead C."/>
            <person name="Ferry-Dumazet H."/>
            <person name="Groppi A."/>
            <person name="Hantraye F."/>
            <person name="Hennequin C."/>
            <person name="Jauniaux N."/>
            <person name="Joyet P."/>
            <person name="Kachouri R."/>
            <person name="Kerrest A."/>
            <person name="Koszul R."/>
            <person name="Lemaire M."/>
            <person name="Lesur I."/>
            <person name="Ma L."/>
            <person name="Muller H."/>
            <person name="Nicaud J.-M."/>
            <person name="Nikolski M."/>
            <person name="Oztas S."/>
            <person name="Ozier-Kalogeropoulos O."/>
            <person name="Pellenz S."/>
            <person name="Potier S."/>
            <person name="Richard G.-F."/>
            <person name="Straub M.-L."/>
            <person name="Suleau A."/>
            <person name="Swennen D."/>
            <person name="Tekaia F."/>
            <person name="Wesolowski-Louvel M."/>
            <person name="Westhof E."/>
            <person name="Wirth B."/>
            <person name="Zeniou-Meyer M."/>
            <person name="Zivanovic Y."/>
            <person name="Bolotin-Fukuhara M."/>
            <person name="Thierry A."/>
            <person name="Bouchier C."/>
            <person name="Caudron B."/>
            <person name="Scarpelli C."/>
            <person name="Gaillardin C."/>
            <person name="Weissenbach J."/>
            <person name="Wincker P."/>
            <person name="Souciet J.-L."/>
        </authorList>
    </citation>
    <scope>NUCLEOTIDE SEQUENCE [LARGE SCALE GENOMIC DNA]</scope>
    <source>
        <strain>ATCC 8585 / CBS 2359 / DSM 70799 / NBRC 1267 / NRRL Y-1140 / WM37</strain>
    </source>
</reference>
<protein>
    <recommendedName>
        <fullName>Chromatin modification-related protein EAF3</fullName>
    </recommendedName>
</protein>
<name>EAF3_KLULA</name>
<sequence length="358" mass="40334">MAIVLDGKCLCYHGPLLYEAKVLRVYDEKNQTITSKDYKDVSIDDEKVEFDRPPEHMRQGQCYFVHYQGWKSSWDEWVGLDRIRPYNDENLELKKSLVEKARELKNNGGKKKSGSRPVGRPSKVEKGKKAASRTSNSGSGTNTSASSTSASNPASSSSSGTTAAASSSDKSDRKKATPVLNKRSHPKIHIKVPISLRSVLVDDWENVTKDRKLVQLPSERPIEHILSQFYADTSNSTSSVVEQAQLSEFLQGIKLYFNLSLGKLLLYRLERIQYAELLKAHSEKQYTEIYGIIHLLRLVTLLPEMMESSNVDDQTAKILVKQCDILLEWIAINIARKNFPVDPYINTSSQYEGVALSM</sequence>
<organism>
    <name type="scientific">Kluyveromyces lactis (strain ATCC 8585 / CBS 2359 / DSM 70799 / NBRC 1267 / NRRL Y-1140 / WM37)</name>
    <name type="common">Yeast</name>
    <name type="synonym">Candida sphaerica</name>
    <dbReference type="NCBI Taxonomy" id="284590"/>
    <lineage>
        <taxon>Eukaryota</taxon>
        <taxon>Fungi</taxon>
        <taxon>Dikarya</taxon>
        <taxon>Ascomycota</taxon>
        <taxon>Saccharomycotina</taxon>
        <taxon>Saccharomycetes</taxon>
        <taxon>Saccharomycetales</taxon>
        <taxon>Saccharomycetaceae</taxon>
        <taxon>Kluyveromyces</taxon>
    </lineage>
</organism>
<proteinExistence type="inferred from homology"/>
<gene>
    <name type="primary">EAF3</name>
    <name type="ordered locus">KLLA0E13541g</name>
</gene>
<feature type="chain" id="PRO_0000088779" description="Chromatin modification-related protein EAF3">
    <location>
        <begin position="1"/>
        <end position="358"/>
    </location>
</feature>
<feature type="domain" description="Tudor-knot" evidence="2">
    <location>
        <begin position="8"/>
        <end position="84"/>
    </location>
</feature>
<feature type="domain" description="MRG" evidence="3">
    <location>
        <begin position="184"/>
        <end position="356"/>
    </location>
</feature>
<feature type="region of interest" description="Disordered" evidence="4">
    <location>
        <begin position="103"/>
        <end position="184"/>
    </location>
</feature>
<feature type="compositionally biased region" description="Low complexity" evidence="4">
    <location>
        <begin position="132"/>
        <end position="168"/>
    </location>
</feature>
<keyword id="KW-0156">Chromatin regulator</keyword>
<keyword id="KW-0227">DNA damage</keyword>
<keyword id="KW-0234">DNA repair</keyword>
<keyword id="KW-0539">Nucleus</keyword>
<keyword id="KW-1185">Reference proteome</keyword>
<keyword id="KW-0804">Transcription</keyword>
<keyword id="KW-0805">Transcription regulation</keyword>
<comment type="function">
    <text evidence="1">Involved in deacetylation of histones, chromatin assembly and chromosome segregation. May act as a transcriptional oscillator, directing histone deacetylases to specific chromosomal domains. Component of the NuA4 histone acetyltransferase complex which is involved in transcriptional activation of selected genes principally by acetylation of nucleosomal histone H4 and H2A. The NuA4 complex is also involved in DNA repair (By similarity).</text>
</comment>
<comment type="subunit">
    <text evidence="1">Component of the NuA4 histone acetyltransferase complex.</text>
</comment>
<comment type="subcellular location">
    <subcellularLocation>
        <location evidence="3">Nucleus</location>
    </subcellularLocation>
</comment>
<comment type="similarity">
    <text evidence="5">Belongs to the MRG family.</text>
</comment>
<dbReference type="EMBL" id="CR382125">
    <property type="protein sequence ID" value="CAG99646.1"/>
    <property type="molecule type" value="Genomic_DNA"/>
</dbReference>
<dbReference type="RefSeq" id="XP_454559.1">
    <property type="nucleotide sequence ID" value="XM_454559.1"/>
</dbReference>
<dbReference type="SMR" id="Q6CND0"/>
<dbReference type="FunCoup" id="Q6CND0">
    <property type="interactions" value="754"/>
</dbReference>
<dbReference type="STRING" id="284590.Q6CND0"/>
<dbReference type="PaxDb" id="284590-Q6CND0"/>
<dbReference type="KEGG" id="kla:KLLA0_E13509g"/>
<dbReference type="eggNOG" id="KOG3001">
    <property type="taxonomic scope" value="Eukaryota"/>
</dbReference>
<dbReference type="HOGENOM" id="CLU_039566_1_1_1"/>
<dbReference type="InParanoid" id="Q6CND0"/>
<dbReference type="OMA" id="GLQTYFD"/>
<dbReference type="Proteomes" id="UP000000598">
    <property type="component" value="Chromosome E"/>
</dbReference>
<dbReference type="GO" id="GO:0035267">
    <property type="term" value="C:NuA4 histone acetyltransferase complex"/>
    <property type="evidence" value="ECO:0007669"/>
    <property type="project" value="TreeGrafter"/>
</dbReference>
<dbReference type="GO" id="GO:0032221">
    <property type="term" value="C:Rpd3S complex"/>
    <property type="evidence" value="ECO:0007669"/>
    <property type="project" value="TreeGrafter"/>
</dbReference>
<dbReference type="GO" id="GO:0006325">
    <property type="term" value="P:chromatin organization"/>
    <property type="evidence" value="ECO:0007669"/>
    <property type="project" value="UniProtKB-KW"/>
</dbReference>
<dbReference type="GO" id="GO:0006281">
    <property type="term" value="P:DNA repair"/>
    <property type="evidence" value="ECO:0007669"/>
    <property type="project" value="UniProtKB-KW"/>
</dbReference>
<dbReference type="GO" id="GO:0006355">
    <property type="term" value="P:regulation of DNA-templated transcription"/>
    <property type="evidence" value="ECO:0007669"/>
    <property type="project" value="InterPro"/>
</dbReference>
<dbReference type="Gene3D" id="2.30.30.140">
    <property type="match status" value="1"/>
</dbReference>
<dbReference type="Gene3D" id="1.10.274.30">
    <property type="entry name" value="MRG domain"/>
    <property type="match status" value="1"/>
</dbReference>
<dbReference type="InterPro" id="IPR016197">
    <property type="entry name" value="Chromo-like_dom_sf"/>
</dbReference>
<dbReference type="InterPro" id="IPR008676">
    <property type="entry name" value="MRG"/>
</dbReference>
<dbReference type="InterPro" id="IPR038217">
    <property type="entry name" value="MRG_C_sf"/>
</dbReference>
<dbReference type="InterPro" id="IPR026541">
    <property type="entry name" value="MRG_dom"/>
</dbReference>
<dbReference type="InterPro" id="IPR053820">
    <property type="entry name" value="MSL3_chromo-like"/>
</dbReference>
<dbReference type="PANTHER" id="PTHR10880">
    <property type="entry name" value="MORTALITY FACTOR 4-LIKE PROTEIN"/>
    <property type="match status" value="1"/>
</dbReference>
<dbReference type="PANTHER" id="PTHR10880:SF15">
    <property type="entry name" value="MSL COMPLEX SUBUNIT 3"/>
    <property type="match status" value="1"/>
</dbReference>
<dbReference type="Pfam" id="PF05712">
    <property type="entry name" value="MRG"/>
    <property type="match status" value="1"/>
</dbReference>
<dbReference type="Pfam" id="PF22732">
    <property type="entry name" value="MSL3_chromo-like"/>
    <property type="match status" value="1"/>
</dbReference>
<dbReference type="PIRSF" id="PIRSF038133">
    <property type="entry name" value="HAT_Nua4_EAF3/MRG15"/>
    <property type="match status" value="1"/>
</dbReference>
<dbReference type="SUPFAM" id="SSF54160">
    <property type="entry name" value="Chromo domain-like"/>
    <property type="match status" value="1"/>
</dbReference>
<dbReference type="PROSITE" id="PS51640">
    <property type="entry name" value="MRG"/>
    <property type="match status" value="1"/>
</dbReference>
<accession>Q6CND0</accession>